<dbReference type="EMBL" id="AAEY01000041">
    <property type="protein sequence ID" value="EAL19332.1"/>
    <property type="status" value="ALT_SEQ"/>
    <property type="molecule type" value="Genomic_DNA"/>
</dbReference>
<dbReference type="RefSeq" id="XP_773979.1">
    <property type="nucleotide sequence ID" value="XM_768886.1"/>
</dbReference>
<dbReference type="GeneID" id="4937538"/>
<dbReference type="KEGG" id="cnb:CNBH0260"/>
<dbReference type="HOGENOM" id="CLU_131611_0_0_1"/>
<dbReference type="OrthoDB" id="5433at5206"/>
<dbReference type="GO" id="GO:0005743">
    <property type="term" value="C:mitochondrial inner membrane"/>
    <property type="evidence" value="ECO:0007669"/>
    <property type="project" value="UniProtKB-SubCell"/>
</dbReference>
<dbReference type="GO" id="GO:0033617">
    <property type="term" value="P:mitochondrial cytochrome c oxidase assembly"/>
    <property type="evidence" value="ECO:0007669"/>
    <property type="project" value="TreeGrafter"/>
</dbReference>
<dbReference type="InterPro" id="IPR020164">
    <property type="entry name" value="Cyt_c_Oxase_assmbl_COX16"/>
</dbReference>
<dbReference type="PANTHER" id="PTHR17130:SF14">
    <property type="entry name" value="CYTOCHROME C OXIDASE ASSEMBLY PROTEIN COX16 HOMOLOG, MITOCHONDRIAL"/>
    <property type="match status" value="1"/>
</dbReference>
<dbReference type="PANTHER" id="PTHR17130">
    <property type="entry name" value="MITOCHONDRIAL OUTER MEMBRANE PROTEIN 25"/>
    <property type="match status" value="1"/>
</dbReference>
<dbReference type="Pfam" id="PF14138">
    <property type="entry name" value="COX16"/>
    <property type="match status" value="1"/>
</dbReference>
<accession>P0CM85</accession>
<accession>Q55NR3</accession>
<accession>Q5KC48</accession>
<name>COX16_CRYNB</name>
<reference key="1">
    <citation type="journal article" date="2005" name="Science">
        <title>The genome of the basidiomycetous yeast and human pathogen Cryptococcus neoformans.</title>
        <authorList>
            <person name="Loftus B.J."/>
            <person name="Fung E."/>
            <person name="Roncaglia P."/>
            <person name="Rowley D."/>
            <person name="Amedeo P."/>
            <person name="Bruno D."/>
            <person name="Vamathevan J."/>
            <person name="Miranda M."/>
            <person name="Anderson I.J."/>
            <person name="Fraser J.A."/>
            <person name="Allen J.E."/>
            <person name="Bosdet I.E."/>
            <person name="Brent M.R."/>
            <person name="Chiu R."/>
            <person name="Doering T.L."/>
            <person name="Donlin M.J."/>
            <person name="D'Souza C.A."/>
            <person name="Fox D.S."/>
            <person name="Grinberg V."/>
            <person name="Fu J."/>
            <person name="Fukushima M."/>
            <person name="Haas B.J."/>
            <person name="Huang J.C."/>
            <person name="Janbon G."/>
            <person name="Jones S.J.M."/>
            <person name="Koo H.L."/>
            <person name="Krzywinski M.I."/>
            <person name="Kwon-Chung K.J."/>
            <person name="Lengeler K.B."/>
            <person name="Maiti R."/>
            <person name="Marra M.A."/>
            <person name="Marra R.E."/>
            <person name="Mathewson C.A."/>
            <person name="Mitchell T.G."/>
            <person name="Pertea M."/>
            <person name="Riggs F.R."/>
            <person name="Salzberg S.L."/>
            <person name="Schein J.E."/>
            <person name="Shvartsbeyn A."/>
            <person name="Shin H."/>
            <person name="Shumway M."/>
            <person name="Specht C.A."/>
            <person name="Suh B.B."/>
            <person name="Tenney A."/>
            <person name="Utterback T.R."/>
            <person name="Wickes B.L."/>
            <person name="Wortman J.R."/>
            <person name="Wye N.H."/>
            <person name="Kronstad J.W."/>
            <person name="Lodge J.K."/>
            <person name="Heitman J."/>
            <person name="Davis R.W."/>
            <person name="Fraser C.M."/>
            <person name="Hyman R.W."/>
        </authorList>
    </citation>
    <scope>NUCLEOTIDE SEQUENCE [LARGE SCALE GENOMIC DNA]</scope>
    <source>
        <strain>B-3501A</strain>
    </source>
</reference>
<sequence>MPPFATRPLNSTKSHPIFAQIRRHPFILFGIPFIGIIVGSSFALQAFTQTRYDYQETKVKSVGKEEELGMKSGRRKIDLKEEYYFSMASVSQDDYEPVRVPRPVGVPEWGGGRSGEEAPMKGYRKEDRWV</sequence>
<protein>
    <recommendedName>
        <fullName>Cytochrome c oxidase assembly protein COX16, mitochondrial</fullName>
    </recommendedName>
</protein>
<keyword id="KW-0472">Membrane</keyword>
<keyword id="KW-0496">Mitochondrion</keyword>
<keyword id="KW-0999">Mitochondrion inner membrane</keyword>
<keyword id="KW-0809">Transit peptide</keyword>
<keyword id="KW-0812">Transmembrane</keyword>
<keyword id="KW-1133">Transmembrane helix</keyword>
<gene>
    <name type="primary">COX16</name>
    <name type="ordered locus">CNBH0260</name>
</gene>
<evidence type="ECO:0000250" key="1">
    <source>
        <dbReference type="UniProtKB" id="P47081"/>
    </source>
</evidence>
<evidence type="ECO:0000255" key="2"/>
<evidence type="ECO:0000256" key="3">
    <source>
        <dbReference type="SAM" id="MobiDB-lite"/>
    </source>
</evidence>
<evidence type="ECO:0000305" key="4"/>
<organism>
    <name type="scientific">Cryptococcus neoformans var. neoformans serotype D (strain B-3501A)</name>
    <name type="common">Filobasidiella neoformans</name>
    <dbReference type="NCBI Taxonomy" id="283643"/>
    <lineage>
        <taxon>Eukaryota</taxon>
        <taxon>Fungi</taxon>
        <taxon>Dikarya</taxon>
        <taxon>Basidiomycota</taxon>
        <taxon>Agaricomycotina</taxon>
        <taxon>Tremellomycetes</taxon>
        <taxon>Tremellales</taxon>
        <taxon>Cryptococcaceae</taxon>
        <taxon>Cryptococcus</taxon>
        <taxon>Cryptococcus neoformans species complex</taxon>
    </lineage>
</organism>
<feature type="transit peptide" description="Mitochondrion" evidence="2">
    <location>
        <begin position="1"/>
        <end position="23"/>
    </location>
</feature>
<feature type="chain" id="PRO_0000410045" description="Cytochrome c oxidase assembly protein COX16, mitochondrial">
    <location>
        <begin position="24"/>
        <end position="130"/>
    </location>
</feature>
<feature type="transmembrane region" description="Helical" evidence="2">
    <location>
        <begin position="26"/>
        <end position="46"/>
    </location>
</feature>
<feature type="region of interest" description="Disordered" evidence="3">
    <location>
        <begin position="106"/>
        <end position="130"/>
    </location>
</feature>
<feature type="compositionally biased region" description="Basic and acidic residues" evidence="3">
    <location>
        <begin position="114"/>
        <end position="130"/>
    </location>
</feature>
<comment type="function">
    <text evidence="1">Required for the assembly of the mitochondrial respiratory chain complex IV (CIV), also known as cytochrome c oxidase. May participate in merging the COX1 and COX2 assembly lines.</text>
</comment>
<comment type="subcellular location">
    <subcellularLocation>
        <location evidence="1">Mitochondrion inner membrane</location>
        <topology evidence="1">Single-pass membrane protein</topology>
    </subcellularLocation>
</comment>
<comment type="similarity">
    <text evidence="4">Belongs to the COX16 family.</text>
</comment>
<comment type="sequence caution" evidence="4">
    <conflict type="erroneous gene model prediction">
        <sequence resource="EMBL-CDS" id="EAL19332"/>
    </conflict>
</comment>
<proteinExistence type="inferred from homology"/>